<name>UBP4_BOVIN</name>
<sequence>MAEGGGYRERPDAETQKSELGALMRTTLQRGAQWYLIDSRWFKQWKKYVGFDSWDMYNVGEHNLYPGPIDNSGLFSDPESQTLKEHLIDELDYVLVPAEAWNKLLNWYGCVEGQQPIVRKVVEHGLFVKHCKVEVYLLELKLCENSDPTNVLSCHFSKADTIATIEKEMRKLFNIPAERETRLWNKYMSNTYEQLSKLDNTVQDAGLYQGQVLVIEPQNEDGTWPRQTQQSKSSTAPSRNFTTSPKSSASPYSSVSASPIANGDSTNTSGMHSSGVSRGGSGFSASYNCQESPLTHVQPGLCGLGNLGNTCFMNSALQCLSNTAPLTDYFLKDEYEAEINRDNPLGMKGEIAEAYAELIKQMWSGRDAHVAPRMFKTQVGRFAPQFSGYQQQDSQELLAFLLDGLHEDLNRVKKKPYLELKDANGRPDAVVAKEAWENHRLRNDSVIVDTFHGLFKSTLVCPECAKVSVTFDPFCYLTLPLPLKKDRVMEIFLVPADPRCRPTQYRVVVPLMGAVSDLCEALSKLSGIAAENMVVTDVYNHRFHKIFQMDEGLNHIMPRDDIFVYEVCSTSPDGSECVTLPVYFRERKSRPSSTSTGAVLYGQPLLVSVPKHKLTLESLYQAVCERISRYIKQPLPDESGSSPLELGACNGSRSGCAGEDEEEMEHQEEGREQLSETEGSGDDEPGSDHGEATQKKNKGRPCPRRLFTFSLVNSYGTADINSLATDGKLLKLNSRSTLAIDWDSETRSCYYNEQESETYEKHVSMLQPQKKKKTAVALRDCIELFTTMETLGEHDPWYCPNCKKHQQATKKFDLWSLPKILVVHLKRFSYNRYWRDKLDTVVEFPVRGLNMSEFVCDPSARPYVYDLIAVSNHYGAMGVGHYTAYAKNKLNGKWYYFDDSNVSLACEDQIVTKAAYVLFYQRRDDEFHKTPSLSFPGSSDGGARPSSSQQGTGDDETYSMDTN</sequence>
<dbReference type="EC" id="3.4.19.12" evidence="2"/>
<dbReference type="EMBL" id="BC150120">
    <property type="protein sequence ID" value="AAI50121.1"/>
    <property type="molecule type" value="mRNA"/>
</dbReference>
<dbReference type="RefSeq" id="NP_001093789.1">
    <property type="nucleotide sequence ID" value="NM_001100319.1"/>
</dbReference>
<dbReference type="SMR" id="A6QR55"/>
<dbReference type="FunCoup" id="A6QR55">
    <property type="interactions" value="4592"/>
</dbReference>
<dbReference type="STRING" id="9913.ENSBTAP00000015787"/>
<dbReference type="MEROPS" id="C19.010"/>
<dbReference type="PaxDb" id="9913-ENSBTAP00000015787"/>
<dbReference type="Ensembl" id="ENSBTAT00000015787.7">
    <property type="protein sequence ID" value="ENSBTAP00000015787.5"/>
    <property type="gene ID" value="ENSBTAG00000011899.7"/>
</dbReference>
<dbReference type="GeneID" id="508042"/>
<dbReference type="KEGG" id="bta:508042"/>
<dbReference type="CTD" id="7375"/>
<dbReference type="VEuPathDB" id="HostDB:ENSBTAG00000011899"/>
<dbReference type="VGNC" id="VGNC:36729">
    <property type="gene designation" value="USP4"/>
</dbReference>
<dbReference type="eggNOG" id="KOG1870">
    <property type="taxonomic scope" value="Eukaryota"/>
</dbReference>
<dbReference type="GeneTree" id="ENSGT00940000156645"/>
<dbReference type="HOGENOM" id="CLU_001060_7_1_1"/>
<dbReference type="InParanoid" id="A6QR55"/>
<dbReference type="OMA" id="KQQHSPN"/>
<dbReference type="OrthoDB" id="265776at2759"/>
<dbReference type="TreeFam" id="TF106276"/>
<dbReference type="Reactome" id="R-BTA-5357786">
    <property type="pathway name" value="TNFR1-induced proapoptotic signaling"/>
</dbReference>
<dbReference type="Reactome" id="R-BTA-5357905">
    <property type="pathway name" value="Regulation of TNFR1 signaling"/>
</dbReference>
<dbReference type="Reactome" id="R-BTA-5357956">
    <property type="pathway name" value="TNFR1-induced NF-kappa-B signaling pathway"/>
</dbReference>
<dbReference type="Reactome" id="R-BTA-5689880">
    <property type="pathway name" value="Ub-specific processing proteases"/>
</dbReference>
<dbReference type="Proteomes" id="UP000009136">
    <property type="component" value="Chromosome 22"/>
</dbReference>
<dbReference type="Bgee" id="ENSBTAG00000011899">
    <property type="expression patterns" value="Expressed in spermatid and 104 other cell types or tissues"/>
</dbReference>
<dbReference type="GO" id="GO:0005737">
    <property type="term" value="C:cytoplasm"/>
    <property type="evidence" value="ECO:0000250"/>
    <property type="project" value="UniProtKB"/>
</dbReference>
<dbReference type="GO" id="GO:0005634">
    <property type="term" value="C:nucleus"/>
    <property type="evidence" value="ECO:0000250"/>
    <property type="project" value="UniProtKB"/>
</dbReference>
<dbReference type="GO" id="GO:0031685">
    <property type="term" value="F:adenosine receptor binding"/>
    <property type="evidence" value="ECO:0007669"/>
    <property type="project" value="Ensembl"/>
</dbReference>
<dbReference type="GO" id="GO:0004843">
    <property type="term" value="F:cysteine-type deubiquitinase activity"/>
    <property type="evidence" value="ECO:0000250"/>
    <property type="project" value="UniProtKB"/>
</dbReference>
<dbReference type="GO" id="GO:0042802">
    <property type="term" value="F:identical protein binding"/>
    <property type="evidence" value="ECO:0007669"/>
    <property type="project" value="Ensembl"/>
</dbReference>
<dbReference type="GO" id="GO:0046872">
    <property type="term" value="F:metal ion binding"/>
    <property type="evidence" value="ECO:0007669"/>
    <property type="project" value="UniProtKB-KW"/>
</dbReference>
<dbReference type="GO" id="GO:0031397">
    <property type="term" value="P:negative regulation of protein ubiquitination"/>
    <property type="evidence" value="ECO:0000250"/>
    <property type="project" value="UniProtKB"/>
</dbReference>
<dbReference type="GO" id="GO:1904263">
    <property type="term" value="P:positive regulation of TORC1 signaling"/>
    <property type="evidence" value="ECO:0000250"/>
    <property type="project" value="UniProtKB"/>
</dbReference>
<dbReference type="GO" id="GO:0016579">
    <property type="term" value="P:protein deubiquitination"/>
    <property type="evidence" value="ECO:0000250"/>
    <property type="project" value="UniProtKB"/>
</dbReference>
<dbReference type="GO" id="GO:0034394">
    <property type="term" value="P:protein localization to cell surface"/>
    <property type="evidence" value="ECO:0000250"/>
    <property type="project" value="UniProtKB"/>
</dbReference>
<dbReference type="GO" id="GO:0006508">
    <property type="term" value="P:proteolysis"/>
    <property type="evidence" value="ECO:0007669"/>
    <property type="project" value="UniProtKB-KW"/>
</dbReference>
<dbReference type="GO" id="GO:0031647">
    <property type="term" value="P:regulation of protein stability"/>
    <property type="evidence" value="ECO:0000250"/>
    <property type="project" value="UniProtKB"/>
</dbReference>
<dbReference type="GO" id="GO:0000244">
    <property type="term" value="P:spliceosomal tri-snRNP complex assembly"/>
    <property type="evidence" value="ECO:0000250"/>
    <property type="project" value="UniProtKB"/>
</dbReference>
<dbReference type="CDD" id="cd02674">
    <property type="entry name" value="Peptidase_C19R"/>
    <property type="match status" value="1"/>
</dbReference>
<dbReference type="FunFam" id="3.30.2230.10:FF:000003">
    <property type="entry name" value="ubiquitin carboxyl-terminal hydrolase 15 isoform X1"/>
    <property type="match status" value="1"/>
</dbReference>
<dbReference type="FunFam" id="3.90.70.10:FF:000013">
    <property type="entry name" value="ubiquitin carboxyl-terminal hydrolase 15 isoform X1"/>
    <property type="match status" value="1"/>
</dbReference>
<dbReference type="FunFam" id="3.10.20.90:FF:000020">
    <property type="entry name" value="ubiquitin carboxyl-terminal hydrolase 15 isoform X2"/>
    <property type="match status" value="1"/>
</dbReference>
<dbReference type="FunFam" id="3.90.70.10:FF:000047">
    <property type="entry name" value="ubiquitin carboxyl-terminal hydrolase 4 isoform X2"/>
    <property type="match status" value="1"/>
</dbReference>
<dbReference type="Gene3D" id="3.90.70.10">
    <property type="entry name" value="Cysteine proteinases"/>
    <property type="match status" value="2"/>
</dbReference>
<dbReference type="Gene3D" id="3.30.2230.10">
    <property type="entry name" value="DUSP-like"/>
    <property type="match status" value="1"/>
</dbReference>
<dbReference type="Gene3D" id="3.10.20.90">
    <property type="entry name" value="Phosphatidylinositol 3-kinase Catalytic Subunit, Chain A, domain 1"/>
    <property type="match status" value="1"/>
</dbReference>
<dbReference type="InterPro" id="IPR035927">
    <property type="entry name" value="DUSP-like_sf"/>
</dbReference>
<dbReference type="InterPro" id="IPR038765">
    <property type="entry name" value="Papain-like_cys_pep_sf"/>
</dbReference>
<dbReference type="InterPro" id="IPR006615">
    <property type="entry name" value="Pept_C19_DUSP"/>
</dbReference>
<dbReference type="InterPro" id="IPR001394">
    <property type="entry name" value="Peptidase_C19_UCH"/>
</dbReference>
<dbReference type="InterPro" id="IPR050185">
    <property type="entry name" value="Ub_carboxyl-term_hydrolase"/>
</dbReference>
<dbReference type="InterPro" id="IPR028135">
    <property type="entry name" value="Ub_USP-typ"/>
</dbReference>
<dbReference type="InterPro" id="IPR018200">
    <property type="entry name" value="USP_CS"/>
</dbReference>
<dbReference type="InterPro" id="IPR028889">
    <property type="entry name" value="USP_dom"/>
</dbReference>
<dbReference type="PANTHER" id="PTHR21646">
    <property type="entry name" value="UBIQUITIN CARBOXYL-TERMINAL HYDROLASE"/>
    <property type="match status" value="1"/>
</dbReference>
<dbReference type="PANTHER" id="PTHR21646:SF45">
    <property type="entry name" value="UBIQUITIN CARBOXYL-TERMINAL HYDROLASE 4"/>
    <property type="match status" value="1"/>
</dbReference>
<dbReference type="Pfam" id="PF06337">
    <property type="entry name" value="DUSP"/>
    <property type="match status" value="1"/>
</dbReference>
<dbReference type="Pfam" id="PF14836">
    <property type="entry name" value="Ubiquitin_3"/>
    <property type="match status" value="1"/>
</dbReference>
<dbReference type="Pfam" id="PF00443">
    <property type="entry name" value="UCH"/>
    <property type="match status" value="1"/>
</dbReference>
<dbReference type="SMART" id="SM00695">
    <property type="entry name" value="DUSP"/>
    <property type="match status" value="1"/>
</dbReference>
<dbReference type="SUPFAM" id="SSF54001">
    <property type="entry name" value="Cysteine proteinases"/>
    <property type="match status" value="1"/>
</dbReference>
<dbReference type="SUPFAM" id="SSF143791">
    <property type="entry name" value="DUSP-like"/>
    <property type="match status" value="1"/>
</dbReference>
<dbReference type="PROSITE" id="PS51283">
    <property type="entry name" value="DUSP"/>
    <property type="match status" value="1"/>
</dbReference>
<dbReference type="PROSITE" id="PS00972">
    <property type="entry name" value="USP_1"/>
    <property type="match status" value="1"/>
</dbReference>
<dbReference type="PROSITE" id="PS00973">
    <property type="entry name" value="USP_2"/>
    <property type="match status" value="1"/>
</dbReference>
<dbReference type="PROSITE" id="PS50235">
    <property type="entry name" value="USP_3"/>
    <property type="match status" value="1"/>
</dbReference>
<organism>
    <name type="scientific">Bos taurus</name>
    <name type="common">Bovine</name>
    <dbReference type="NCBI Taxonomy" id="9913"/>
    <lineage>
        <taxon>Eukaryota</taxon>
        <taxon>Metazoa</taxon>
        <taxon>Chordata</taxon>
        <taxon>Craniata</taxon>
        <taxon>Vertebrata</taxon>
        <taxon>Euteleostomi</taxon>
        <taxon>Mammalia</taxon>
        <taxon>Eutheria</taxon>
        <taxon>Laurasiatheria</taxon>
        <taxon>Artiodactyla</taxon>
        <taxon>Ruminantia</taxon>
        <taxon>Pecora</taxon>
        <taxon>Bovidae</taxon>
        <taxon>Bovinae</taxon>
        <taxon>Bos</taxon>
    </lineage>
</organism>
<reference key="1">
    <citation type="submission" date="2007-07" db="EMBL/GenBank/DDBJ databases">
        <authorList>
            <consortium name="NIH - Mammalian Gene Collection (MGC) project"/>
        </authorList>
    </citation>
    <scope>NUCLEOTIDE SEQUENCE [LARGE SCALE MRNA]</scope>
    <source>
        <strain>Hereford</strain>
        <tissue>Basal ganglia</tissue>
    </source>
</reference>
<proteinExistence type="evidence at transcript level"/>
<gene>
    <name type="primary">USP4</name>
</gene>
<keyword id="KW-0963">Cytoplasm</keyword>
<keyword id="KW-0378">Hydrolase</keyword>
<keyword id="KW-0479">Metal-binding</keyword>
<keyword id="KW-0539">Nucleus</keyword>
<keyword id="KW-0597">Phosphoprotein</keyword>
<keyword id="KW-0645">Protease</keyword>
<keyword id="KW-1185">Reference proteome</keyword>
<keyword id="KW-0677">Repeat</keyword>
<keyword id="KW-0788">Thiol protease</keyword>
<keyword id="KW-0832">Ubl conjugation</keyword>
<keyword id="KW-0833">Ubl conjugation pathway</keyword>
<keyword id="KW-0862">Zinc</keyword>
<feature type="chain" id="PRO_0000301668" description="Ubiquitin carboxyl-terminal hydrolase 4">
    <location>
        <begin position="1"/>
        <end position="963"/>
    </location>
</feature>
<feature type="domain" description="DUSP" evidence="4">
    <location>
        <begin position="11"/>
        <end position="122"/>
    </location>
</feature>
<feature type="domain" description="Ubiquitin-like 1" evidence="3">
    <location>
        <begin position="142"/>
        <end position="226"/>
    </location>
</feature>
<feature type="domain" description="USP" evidence="5">
    <location>
        <begin position="302"/>
        <end position="923"/>
    </location>
</feature>
<feature type="domain" description="Ubiquitin-like 2" evidence="3">
    <location>
        <begin position="483"/>
        <end position="571"/>
    </location>
</feature>
<feature type="region of interest" description="Necessary for interaction with SART3" evidence="2">
    <location>
        <begin position="27"/>
        <end position="216"/>
    </location>
</feature>
<feature type="region of interest" description="Disordered" evidence="6">
    <location>
        <begin position="219"/>
        <end position="277"/>
    </location>
</feature>
<feature type="region of interest" description="Required for USP4 activation by providing conformational flexibility between the DUSP and catalytic domains" evidence="2">
    <location>
        <begin position="229"/>
        <end position="295"/>
    </location>
</feature>
<feature type="region of interest" description="Regulates ubiquitin dissociation" evidence="2">
    <location>
        <begin position="384"/>
        <end position="386"/>
    </location>
</feature>
<feature type="region of interest" description="Necessary for interaction with RBL2" evidence="1">
    <location>
        <begin position="405"/>
        <end position="407"/>
    </location>
</feature>
<feature type="region of interest" description="Necessary for interaction with RB1 and RBL2" evidence="1">
    <location>
        <begin position="459"/>
        <end position="463"/>
    </location>
</feature>
<feature type="region of interest" description="Interacts with DUSP and ubiquitin-like 1 domains and is required for USP4 activation" evidence="2">
    <location>
        <begin position="485"/>
        <end position="775"/>
    </location>
</feature>
<feature type="region of interest" description="Disordered" evidence="6">
    <location>
        <begin position="634"/>
        <end position="701"/>
    </location>
</feature>
<feature type="region of interest" description="Disordered" evidence="6">
    <location>
        <begin position="930"/>
        <end position="963"/>
    </location>
</feature>
<feature type="short sequence motif" description="Nuclear export signal" evidence="1">
    <location>
        <begin position="133"/>
        <end position="141"/>
    </location>
</feature>
<feature type="short sequence motif" description="Nuclear localization signal" evidence="1">
    <location>
        <begin position="767"/>
        <end position="772"/>
    </location>
</feature>
<feature type="compositionally biased region" description="Polar residues" evidence="6">
    <location>
        <begin position="225"/>
        <end position="243"/>
    </location>
</feature>
<feature type="compositionally biased region" description="Low complexity" evidence="6">
    <location>
        <begin position="244"/>
        <end position="261"/>
    </location>
</feature>
<feature type="compositionally biased region" description="Acidic residues" evidence="6">
    <location>
        <begin position="953"/>
        <end position="963"/>
    </location>
</feature>
<feature type="active site" description="Nucleophile" evidence="5">
    <location>
        <position position="311"/>
    </location>
</feature>
<feature type="active site" description="Proton acceptor" evidence="5">
    <location>
        <position position="881"/>
    </location>
</feature>
<feature type="binding site" evidence="2">
    <location>
        <position position="461"/>
    </location>
    <ligand>
        <name>Zn(2+)</name>
        <dbReference type="ChEBI" id="CHEBI:29105"/>
    </ligand>
</feature>
<feature type="binding site" evidence="2">
    <location>
        <position position="464"/>
    </location>
    <ligand>
        <name>Zn(2+)</name>
        <dbReference type="ChEBI" id="CHEBI:29105"/>
    </ligand>
</feature>
<feature type="binding site" evidence="2">
    <location>
        <position position="799"/>
    </location>
    <ligand>
        <name>Zn(2+)</name>
        <dbReference type="ChEBI" id="CHEBI:29105"/>
    </ligand>
</feature>
<feature type="binding site" evidence="2">
    <location>
        <position position="802"/>
    </location>
    <ligand>
        <name>Zn(2+)</name>
        <dbReference type="ChEBI" id="CHEBI:29105"/>
    </ligand>
</feature>
<feature type="modified residue" description="Phosphoserine" evidence="2">
    <location>
        <position position="445"/>
    </location>
</feature>
<feature type="modified residue" description="Phosphoserine" evidence="1">
    <location>
        <position position="675"/>
    </location>
</feature>
<feature type="modified residue" description="Phosphoserine" evidence="1">
    <location>
        <position position="680"/>
    </location>
</feature>
<protein>
    <recommendedName>
        <fullName>Ubiquitin carboxyl-terminal hydrolase 4</fullName>
        <ecNumber evidence="2">3.4.19.12</ecNumber>
    </recommendedName>
    <alternativeName>
        <fullName>Deubiquitinating enzyme 4</fullName>
    </alternativeName>
    <alternativeName>
        <fullName>Ubiquitin thioesterase 4</fullName>
    </alternativeName>
    <alternativeName>
        <fullName>Ubiquitin-specific-processing protease 4</fullName>
    </alternativeName>
</protein>
<comment type="function">
    <text evidence="2">Deubiquitinating enzyme that removes conjugated ubiquitin from target proteins. Deubiquitinates PDPK1. Deubiquitinates TRIM21. Deubiquitinates receptor ADORA2A which increases the amount of functional receptor at the cell surface. Deubiquitinates HAS2. Deubiquitinates RHEB in response to EGF signaling, promoting mTORC1 signaling. May regulate mRNA splicing through deubiquitination of the U4 spliceosomal protein PRPF3. This may prevent its recognition by the U5 component PRPF8 thereby destabilizing interactions within the U4/U6.U5 snRNP. May also play a role in the regulation of quality control in the ER.</text>
</comment>
<comment type="catalytic activity">
    <reaction evidence="2">
        <text>Thiol-dependent hydrolysis of ester, thioester, amide, peptide and isopeptide bonds formed by the C-terminal Gly of ubiquitin (a 76-residue protein attached to proteins as an intracellular targeting signal).</text>
        <dbReference type="EC" id="3.4.19.12"/>
    </reaction>
</comment>
<comment type="activity regulation">
    <text evidence="2">The completion of the deubiquitinase reaction is mediated by the DUSP and ubiquitin-like 1 domains which promotes the release of ubiquitin from the catalytic site enabling subsequent reactions to occur.</text>
</comment>
<comment type="subunit">
    <text evidence="1 2">Interacts with RB1 (both dephosphorylated and hypophosphorylated forms) (By similarity). Interacts with RBL1 and RBL2 (By similarity). Interacts with ADORA2A (via cytoplasmic C-terminus); the interaction is direct. Interacts with SART3; recruits USP4 to its substrate PRPF3 (By similarity).</text>
</comment>
<comment type="subcellular location">
    <subcellularLocation>
        <location evidence="1 2">Cytoplasm</location>
    </subcellularLocation>
    <subcellularLocation>
        <location evidence="1 2">Nucleus</location>
    </subcellularLocation>
    <text evidence="1 2">Shuttles between the nucleus and cytoplasm. Exported to the cytoplasm in a CRM1-dependent manner and recycled back to the nucleus via the importin alpha/beta heterodimeric import receptor. The relative amounts found in the nucleus and cytoplasm vary according to the cell type.</text>
</comment>
<comment type="domain">
    <text evidence="2">The DUSP and ubiquitin-like 1 domains promote ubiquitin release and thus enhance USB4 catalytic activity. However, these domains do not bind ubiquitin.</text>
</comment>
<comment type="PTM">
    <text evidence="2">Phosphorylated at Ser-445 by PKB/AKT1 in response to EGF stimulus, promoting its ability deubiquitinate RHEB.</text>
</comment>
<comment type="PTM">
    <text evidence="2">Monoubiquitinated by TRIM21. Ubiquitination does not lead to its proteasomal degradation. Autodeubiquitinated.</text>
</comment>
<comment type="similarity">
    <text evidence="7">Belongs to the peptidase C19 family. USP4 subfamily.</text>
</comment>
<accession>A6QR55</accession>
<evidence type="ECO:0000250" key="1">
    <source>
        <dbReference type="UniProtKB" id="P35123"/>
    </source>
</evidence>
<evidence type="ECO:0000250" key="2">
    <source>
        <dbReference type="UniProtKB" id="Q13107"/>
    </source>
</evidence>
<evidence type="ECO:0000255" key="3"/>
<evidence type="ECO:0000255" key="4">
    <source>
        <dbReference type="PROSITE-ProRule" id="PRU00613"/>
    </source>
</evidence>
<evidence type="ECO:0000255" key="5">
    <source>
        <dbReference type="PROSITE-ProRule" id="PRU01035"/>
    </source>
</evidence>
<evidence type="ECO:0000256" key="6">
    <source>
        <dbReference type="SAM" id="MobiDB-lite"/>
    </source>
</evidence>
<evidence type="ECO:0000305" key="7"/>